<evidence type="ECO:0000255" key="1">
    <source>
        <dbReference type="HAMAP-Rule" id="MF_01197"/>
    </source>
</evidence>
<reference key="1">
    <citation type="journal article" date="2011" name="PLoS Genet.">
        <title>The evolution of host specialization in the vertebrate gut symbiont Lactobacillus reuteri.</title>
        <authorList>
            <person name="Frese S.A."/>
            <person name="Benson A.K."/>
            <person name="Tannock G.W."/>
            <person name="Loach D.M."/>
            <person name="Kim J."/>
            <person name="Zhang M."/>
            <person name="Oh P.L."/>
            <person name="Heng N.C."/>
            <person name="Patil P.B."/>
            <person name="Juge N."/>
            <person name="Mackenzie D.A."/>
            <person name="Pearson B.M."/>
            <person name="Lapidus A."/>
            <person name="Dalin E."/>
            <person name="Tice H."/>
            <person name="Goltsman E."/>
            <person name="Land M."/>
            <person name="Hauser L."/>
            <person name="Ivanova N."/>
            <person name="Kyrpides N.C."/>
            <person name="Walter J."/>
        </authorList>
    </citation>
    <scope>NUCLEOTIDE SEQUENCE [LARGE SCALE GENOMIC DNA]</scope>
    <source>
        <strain>DSM 20016</strain>
    </source>
</reference>
<organism>
    <name type="scientific">Limosilactobacillus reuteri (strain DSM 20016)</name>
    <name type="common">Lactobacillus reuteri</name>
    <dbReference type="NCBI Taxonomy" id="557436"/>
    <lineage>
        <taxon>Bacteria</taxon>
        <taxon>Bacillati</taxon>
        <taxon>Bacillota</taxon>
        <taxon>Bacilli</taxon>
        <taxon>Lactobacillales</taxon>
        <taxon>Lactobacillaceae</taxon>
        <taxon>Limosilactobacillus</taxon>
    </lineage>
</organism>
<keyword id="KW-0131">Cell cycle</keyword>
<keyword id="KW-0132">Cell division</keyword>
<keyword id="KW-0963">Cytoplasm</keyword>
<keyword id="KW-1185">Reference proteome</keyword>
<keyword id="KW-0717">Septation</keyword>
<accession>A5VJ37</accession>
<name>SEPF_LIMRD</name>
<gene>
    <name evidence="1" type="primary">sepF</name>
    <name type="ordered locus">Lreu_0594</name>
</gene>
<dbReference type="EMBL" id="CP000705">
    <property type="protein sequence ID" value="ABQ82861.1"/>
    <property type="molecule type" value="Genomic_DNA"/>
</dbReference>
<dbReference type="RefSeq" id="WP_003668316.1">
    <property type="nucleotide sequence ID" value="NZ_AZDD01000002.1"/>
</dbReference>
<dbReference type="SMR" id="A5VJ37"/>
<dbReference type="STRING" id="557436.Lreu_0594"/>
<dbReference type="KEGG" id="lre:Lreu_0594"/>
<dbReference type="PATRIC" id="fig|557436.17.peg.666"/>
<dbReference type="eggNOG" id="COG1799">
    <property type="taxonomic scope" value="Bacteria"/>
</dbReference>
<dbReference type="HOGENOM" id="CLU_078499_4_1_9"/>
<dbReference type="Proteomes" id="UP000001991">
    <property type="component" value="Chromosome"/>
</dbReference>
<dbReference type="GO" id="GO:0005737">
    <property type="term" value="C:cytoplasm"/>
    <property type="evidence" value="ECO:0007669"/>
    <property type="project" value="UniProtKB-SubCell"/>
</dbReference>
<dbReference type="GO" id="GO:0000917">
    <property type="term" value="P:division septum assembly"/>
    <property type="evidence" value="ECO:0007669"/>
    <property type="project" value="UniProtKB-KW"/>
</dbReference>
<dbReference type="GO" id="GO:0043093">
    <property type="term" value="P:FtsZ-dependent cytokinesis"/>
    <property type="evidence" value="ECO:0007669"/>
    <property type="project" value="UniProtKB-UniRule"/>
</dbReference>
<dbReference type="Gene3D" id="3.30.110.150">
    <property type="entry name" value="SepF-like protein"/>
    <property type="match status" value="1"/>
</dbReference>
<dbReference type="HAMAP" id="MF_01197">
    <property type="entry name" value="SepF"/>
    <property type="match status" value="1"/>
</dbReference>
<dbReference type="InterPro" id="IPR023052">
    <property type="entry name" value="Cell_div_SepF"/>
</dbReference>
<dbReference type="InterPro" id="IPR007561">
    <property type="entry name" value="Cell_div_SepF/SepF-rel"/>
</dbReference>
<dbReference type="InterPro" id="IPR038594">
    <property type="entry name" value="SepF-like_sf"/>
</dbReference>
<dbReference type="PANTHER" id="PTHR35798">
    <property type="entry name" value="CELL DIVISION PROTEIN SEPF"/>
    <property type="match status" value="1"/>
</dbReference>
<dbReference type="PANTHER" id="PTHR35798:SF1">
    <property type="entry name" value="CELL DIVISION PROTEIN SEPF"/>
    <property type="match status" value="1"/>
</dbReference>
<dbReference type="Pfam" id="PF04472">
    <property type="entry name" value="SepF"/>
    <property type="match status" value="1"/>
</dbReference>
<comment type="function">
    <text evidence="1">Cell division protein that is part of the divisome complex and is recruited early to the Z-ring. Probably stimulates Z-ring formation, perhaps through the cross-linking of FtsZ protofilaments. Its function overlaps with FtsA.</text>
</comment>
<comment type="subunit">
    <text evidence="1">Homodimer. Interacts with FtsZ.</text>
</comment>
<comment type="subcellular location">
    <subcellularLocation>
        <location evidence="1">Cytoplasm</location>
    </subcellularLocation>
    <text evidence="1">Localizes to the division site, in a FtsZ-dependent manner.</text>
</comment>
<comment type="similarity">
    <text evidence="1">Belongs to the SepF family.</text>
</comment>
<protein>
    <recommendedName>
        <fullName evidence="1">Cell division protein SepF</fullName>
    </recommendedName>
</protein>
<proteinExistence type="inferred from homology"/>
<feature type="chain" id="PRO_0000334024" description="Cell division protein SepF">
    <location>
        <begin position="1"/>
        <end position="138"/>
    </location>
</feature>
<sequence length="138" mass="15245">MAANFLKSLFGEEDIDEQDGLYETSEQVSTPANTSNKVVSINSGRLNQMSQISLYEPRLYADVKQIASQLLEGHAVIVNFTQMDANVAARLVDFLNGTVFAIDGEMKRIGKEIFLCTPKNYEISGSLTSNLKNDGDKF</sequence>